<gene>
    <name evidence="1" type="primary">dxr</name>
    <name type="ordered locus">YPA_0524</name>
</gene>
<sequence length="398" mass="43115">MKQLTILGSTGSIGNSTLSVVRANPELFKVTALVAGRNVREMAQQCLEFSPRYAAMSDEHSAKSLRLLLAEQGSDTEVYSGETAACELAALDDVDQVMAAIVGIAGLPSTLAAIRAGKQVLLANKESLITCGKLFMDEVKRSRAQLLPIDSEHNAIFQSLPERIQRQLGYSSLNENGVSRIILTGSGGPFRETPLSQFSDVTPDQACAHPNWSMGRKISVDSATMMNKGLEYIEARWLFNASAEQIEVVLHPQSVIHSMVRYHDGSILAQMGTPDMRTPIAHAMAYPMRVSSGVAPLDFCKVGALTFTTPDYQRYPCLKLAIDACNAGQAATTALNAANEISVMAFLDSKIRFTDIEVINRTVVEGLLLSEPTSVEEVLVIDRKARDVAAQVIAKLNN</sequence>
<protein>
    <recommendedName>
        <fullName evidence="1">1-deoxy-D-xylulose 5-phosphate reductoisomerase</fullName>
        <shortName evidence="1">DXP reductoisomerase</shortName>
        <ecNumber evidence="1">1.1.1.267</ecNumber>
    </recommendedName>
    <alternativeName>
        <fullName evidence="1">1-deoxyxylulose-5-phosphate reductoisomerase</fullName>
    </alternativeName>
    <alternativeName>
        <fullName evidence="1">2-C-methyl-D-erythritol 4-phosphate synthase</fullName>
    </alternativeName>
</protein>
<organism>
    <name type="scientific">Yersinia pestis bv. Antiqua (strain Antiqua)</name>
    <dbReference type="NCBI Taxonomy" id="360102"/>
    <lineage>
        <taxon>Bacteria</taxon>
        <taxon>Pseudomonadati</taxon>
        <taxon>Pseudomonadota</taxon>
        <taxon>Gammaproteobacteria</taxon>
        <taxon>Enterobacterales</taxon>
        <taxon>Yersiniaceae</taxon>
        <taxon>Yersinia</taxon>
    </lineage>
</organism>
<proteinExistence type="inferred from homology"/>
<dbReference type="EC" id="1.1.1.267" evidence="1"/>
<dbReference type="EMBL" id="CP000308">
    <property type="protein sequence ID" value="ABG12492.1"/>
    <property type="molecule type" value="Genomic_DNA"/>
</dbReference>
<dbReference type="SMR" id="Q1CAN0"/>
<dbReference type="KEGG" id="ypa:YPA_0524"/>
<dbReference type="UniPathway" id="UPA00056">
    <property type="reaction ID" value="UER00092"/>
</dbReference>
<dbReference type="Proteomes" id="UP000001971">
    <property type="component" value="Chromosome"/>
</dbReference>
<dbReference type="GO" id="GO:0030604">
    <property type="term" value="F:1-deoxy-D-xylulose-5-phosphate reductoisomerase activity"/>
    <property type="evidence" value="ECO:0007669"/>
    <property type="project" value="UniProtKB-UniRule"/>
</dbReference>
<dbReference type="GO" id="GO:0030145">
    <property type="term" value="F:manganese ion binding"/>
    <property type="evidence" value="ECO:0007669"/>
    <property type="project" value="TreeGrafter"/>
</dbReference>
<dbReference type="GO" id="GO:0070402">
    <property type="term" value="F:NADPH binding"/>
    <property type="evidence" value="ECO:0007669"/>
    <property type="project" value="InterPro"/>
</dbReference>
<dbReference type="GO" id="GO:0051484">
    <property type="term" value="P:isopentenyl diphosphate biosynthetic process, methylerythritol 4-phosphate pathway involved in terpenoid biosynthetic process"/>
    <property type="evidence" value="ECO:0007669"/>
    <property type="project" value="TreeGrafter"/>
</dbReference>
<dbReference type="FunFam" id="1.10.1740.10:FF:000004">
    <property type="entry name" value="1-deoxy-D-xylulose 5-phosphate reductoisomerase"/>
    <property type="match status" value="1"/>
</dbReference>
<dbReference type="FunFam" id="3.40.50.720:FF:000045">
    <property type="entry name" value="1-deoxy-D-xylulose 5-phosphate reductoisomerase"/>
    <property type="match status" value="1"/>
</dbReference>
<dbReference type="Gene3D" id="1.10.1740.10">
    <property type="match status" value="1"/>
</dbReference>
<dbReference type="Gene3D" id="3.40.50.720">
    <property type="entry name" value="NAD(P)-binding Rossmann-like Domain"/>
    <property type="match status" value="1"/>
</dbReference>
<dbReference type="HAMAP" id="MF_00183">
    <property type="entry name" value="DXP_reductoisom"/>
    <property type="match status" value="1"/>
</dbReference>
<dbReference type="InterPro" id="IPR003821">
    <property type="entry name" value="DXP_reductoisomerase"/>
</dbReference>
<dbReference type="InterPro" id="IPR013644">
    <property type="entry name" value="DXP_reductoisomerase_C"/>
</dbReference>
<dbReference type="InterPro" id="IPR013512">
    <property type="entry name" value="DXP_reductoisomerase_N"/>
</dbReference>
<dbReference type="InterPro" id="IPR026877">
    <property type="entry name" value="DXPR_C"/>
</dbReference>
<dbReference type="InterPro" id="IPR036169">
    <property type="entry name" value="DXPR_C_sf"/>
</dbReference>
<dbReference type="InterPro" id="IPR036291">
    <property type="entry name" value="NAD(P)-bd_dom_sf"/>
</dbReference>
<dbReference type="NCBIfam" id="TIGR00243">
    <property type="entry name" value="Dxr"/>
    <property type="match status" value="1"/>
</dbReference>
<dbReference type="NCBIfam" id="NF003938">
    <property type="entry name" value="PRK05447.1-1"/>
    <property type="match status" value="1"/>
</dbReference>
<dbReference type="NCBIfam" id="NF009114">
    <property type="entry name" value="PRK12464.1"/>
    <property type="match status" value="1"/>
</dbReference>
<dbReference type="PANTHER" id="PTHR30525">
    <property type="entry name" value="1-DEOXY-D-XYLULOSE 5-PHOSPHATE REDUCTOISOMERASE"/>
    <property type="match status" value="1"/>
</dbReference>
<dbReference type="PANTHER" id="PTHR30525:SF0">
    <property type="entry name" value="1-DEOXY-D-XYLULOSE 5-PHOSPHATE REDUCTOISOMERASE, CHLOROPLASTIC"/>
    <property type="match status" value="1"/>
</dbReference>
<dbReference type="Pfam" id="PF08436">
    <property type="entry name" value="DXP_redisom_C"/>
    <property type="match status" value="1"/>
</dbReference>
<dbReference type="Pfam" id="PF02670">
    <property type="entry name" value="DXP_reductoisom"/>
    <property type="match status" value="1"/>
</dbReference>
<dbReference type="Pfam" id="PF13288">
    <property type="entry name" value="DXPR_C"/>
    <property type="match status" value="1"/>
</dbReference>
<dbReference type="PIRSF" id="PIRSF006205">
    <property type="entry name" value="Dxp_reductismrs"/>
    <property type="match status" value="1"/>
</dbReference>
<dbReference type="SUPFAM" id="SSF69055">
    <property type="entry name" value="1-deoxy-D-xylulose-5-phosphate reductoisomerase, C-terminal domain"/>
    <property type="match status" value="1"/>
</dbReference>
<dbReference type="SUPFAM" id="SSF55347">
    <property type="entry name" value="Glyceraldehyde-3-phosphate dehydrogenase-like, C-terminal domain"/>
    <property type="match status" value="1"/>
</dbReference>
<dbReference type="SUPFAM" id="SSF51735">
    <property type="entry name" value="NAD(P)-binding Rossmann-fold domains"/>
    <property type="match status" value="1"/>
</dbReference>
<evidence type="ECO:0000255" key="1">
    <source>
        <dbReference type="HAMAP-Rule" id="MF_00183"/>
    </source>
</evidence>
<accession>Q1CAN0</accession>
<keyword id="KW-0414">Isoprene biosynthesis</keyword>
<keyword id="KW-0464">Manganese</keyword>
<keyword id="KW-0479">Metal-binding</keyword>
<keyword id="KW-0521">NADP</keyword>
<keyword id="KW-0560">Oxidoreductase</keyword>
<name>DXR_YERPA</name>
<comment type="function">
    <text evidence="1">Catalyzes the NADPH-dependent rearrangement and reduction of 1-deoxy-D-xylulose-5-phosphate (DXP) to 2-C-methyl-D-erythritol 4-phosphate (MEP).</text>
</comment>
<comment type="catalytic activity">
    <reaction evidence="1">
        <text>2-C-methyl-D-erythritol 4-phosphate + NADP(+) = 1-deoxy-D-xylulose 5-phosphate + NADPH + H(+)</text>
        <dbReference type="Rhea" id="RHEA:13717"/>
        <dbReference type="ChEBI" id="CHEBI:15378"/>
        <dbReference type="ChEBI" id="CHEBI:57783"/>
        <dbReference type="ChEBI" id="CHEBI:57792"/>
        <dbReference type="ChEBI" id="CHEBI:58262"/>
        <dbReference type="ChEBI" id="CHEBI:58349"/>
        <dbReference type="EC" id="1.1.1.267"/>
    </reaction>
    <physiologicalReaction direction="right-to-left" evidence="1">
        <dbReference type="Rhea" id="RHEA:13719"/>
    </physiologicalReaction>
</comment>
<comment type="cofactor">
    <cofactor evidence="1">
        <name>Mg(2+)</name>
        <dbReference type="ChEBI" id="CHEBI:18420"/>
    </cofactor>
    <cofactor evidence="1">
        <name>Mn(2+)</name>
        <dbReference type="ChEBI" id="CHEBI:29035"/>
    </cofactor>
</comment>
<comment type="pathway">
    <text evidence="1">Isoprenoid biosynthesis; isopentenyl diphosphate biosynthesis via DXP pathway; isopentenyl diphosphate from 1-deoxy-D-xylulose 5-phosphate: step 1/6.</text>
</comment>
<comment type="subunit">
    <text evidence="1">Homodimer.</text>
</comment>
<comment type="similarity">
    <text evidence="1">Belongs to the DXR family.</text>
</comment>
<feature type="chain" id="PRO_1000020326" description="1-deoxy-D-xylulose 5-phosphate reductoisomerase">
    <location>
        <begin position="1"/>
        <end position="398"/>
    </location>
</feature>
<feature type="binding site" evidence="1">
    <location>
        <position position="10"/>
    </location>
    <ligand>
        <name>NADPH</name>
        <dbReference type="ChEBI" id="CHEBI:57783"/>
    </ligand>
</feature>
<feature type="binding site" evidence="1">
    <location>
        <position position="11"/>
    </location>
    <ligand>
        <name>NADPH</name>
        <dbReference type="ChEBI" id="CHEBI:57783"/>
    </ligand>
</feature>
<feature type="binding site" evidence="1">
    <location>
        <position position="12"/>
    </location>
    <ligand>
        <name>NADPH</name>
        <dbReference type="ChEBI" id="CHEBI:57783"/>
    </ligand>
</feature>
<feature type="binding site" evidence="1">
    <location>
        <position position="13"/>
    </location>
    <ligand>
        <name>NADPH</name>
        <dbReference type="ChEBI" id="CHEBI:57783"/>
    </ligand>
</feature>
<feature type="binding site" evidence="1">
    <location>
        <position position="36"/>
    </location>
    <ligand>
        <name>NADPH</name>
        <dbReference type="ChEBI" id="CHEBI:57783"/>
    </ligand>
</feature>
<feature type="binding site" evidence="1">
    <location>
        <position position="37"/>
    </location>
    <ligand>
        <name>NADPH</name>
        <dbReference type="ChEBI" id="CHEBI:57783"/>
    </ligand>
</feature>
<feature type="binding site" evidence="1">
    <location>
        <position position="38"/>
    </location>
    <ligand>
        <name>NADPH</name>
        <dbReference type="ChEBI" id="CHEBI:57783"/>
    </ligand>
</feature>
<feature type="binding site" evidence="1">
    <location>
        <position position="124"/>
    </location>
    <ligand>
        <name>NADPH</name>
        <dbReference type="ChEBI" id="CHEBI:57783"/>
    </ligand>
</feature>
<feature type="binding site" evidence="1">
    <location>
        <position position="125"/>
    </location>
    <ligand>
        <name>1-deoxy-D-xylulose 5-phosphate</name>
        <dbReference type="ChEBI" id="CHEBI:57792"/>
    </ligand>
</feature>
<feature type="binding site" evidence="1">
    <location>
        <position position="126"/>
    </location>
    <ligand>
        <name>NADPH</name>
        <dbReference type="ChEBI" id="CHEBI:57783"/>
    </ligand>
</feature>
<feature type="binding site" evidence="1">
    <location>
        <position position="150"/>
    </location>
    <ligand>
        <name>Mn(2+)</name>
        <dbReference type="ChEBI" id="CHEBI:29035"/>
    </ligand>
</feature>
<feature type="binding site" evidence="1">
    <location>
        <position position="151"/>
    </location>
    <ligand>
        <name>1-deoxy-D-xylulose 5-phosphate</name>
        <dbReference type="ChEBI" id="CHEBI:57792"/>
    </ligand>
</feature>
<feature type="binding site" evidence="1">
    <location>
        <position position="152"/>
    </location>
    <ligand>
        <name>1-deoxy-D-xylulose 5-phosphate</name>
        <dbReference type="ChEBI" id="CHEBI:57792"/>
    </ligand>
</feature>
<feature type="binding site" evidence="1">
    <location>
        <position position="152"/>
    </location>
    <ligand>
        <name>Mn(2+)</name>
        <dbReference type="ChEBI" id="CHEBI:29035"/>
    </ligand>
</feature>
<feature type="binding site" evidence="1">
    <location>
        <position position="186"/>
    </location>
    <ligand>
        <name>1-deoxy-D-xylulose 5-phosphate</name>
        <dbReference type="ChEBI" id="CHEBI:57792"/>
    </ligand>
</feature>
<feature type="binding site" evidence="1">
    <location>
        <position position="209"/>
    </location>
    <ligand>
        <name>1-deoxy-D-xylulose 5-phosphate</name>
        <dbReference type="ChEBI" id="CHEBI:57792"/>
    </ligand>
</feature>
<feature type="binding site" evidence="1">
    <location>
        <position position="215"/>
    </location>
    <ligand>
        <name>NADPH</name>
        <dbReference type="ChEBI" id="CHEBI:57783"/>
    </ligand>
</feature>
<feature type="binding site" evidence="1">
    <location>
        <position position="222"/>
    </location>
    <ligand>
        <name>1-deoxy-D-xylulose 5-phosphate</name>
        <dbReference type="ChEBI" id="CHEBI:57792"/>
    </ligand>
</feature>
<feature type="binding site" evidence="1">
    <location>
        <position position="227"/>
    </location>
    <ligand>
        <name>1-deoxy-D-xylulose 5-phosphate</name>
        <dbReference type="ChEBI" id="CHEBI:57792"/>
    </ligand>
</feature>
<feature type="binding site" evidence="1">
    <location>
        <position position="228"/>
    </location>
    <ligand>
        <name>1-deoxy-D-xylulose 5-phosphate</name>
        <dbReference type="ChEBI" id="CHEBI:57792"/>
    </ligand>
</feature>
<feature type="binding site" evidence="1">
    <location>
        <position position="231"/>
    </location>
    <ligand>
        <name>1-deoxy-D-xylulose 5-phosphate</name>
        <dbReference type="ChEBI" id="CHEBI:57792"/>
    </ligand>
</feature>
<feature type="binding site" evidence="1">
    <location>
        <position position="231"/>
    </location>
    <ligand>
        <name>Mn(2+)</name>
        <dbReference type="ChEBI" id="CHEBI:29035"/>
    </ligand>
</feature>
<reference key="1">
    <citation type="journal article" date="2006" name="J. Bacteriol.">
        <title>Complete genome sequence of Yersinia pestis strains Antiqua and Nepal516: evidence of gene reduction in an emerging pathogen.</title>
        <authorList>
            <person name="Chain P.S.G."/>
            <person name="Hu P."/>
            <person name="Malfatti S.A."/>
            <person name="Radnedge L."/>
            <person name="Larimer F."/>
            <person name="Vergez L.M."/>
            <person name="Worsham P."/>
            <person name="Chu M.C."/>
            <person name="Andersen G.L."/>
        </authorList>
    </citation>
    <scope>NUCLEOTIDE SEQUENCE [LARGE SCALE GENOMIC DNA]</scope>
    <source>
        <strain>Antiqua</strain>
    </source>
</reference>